<proteinExistence type="predicted"/>
<dbReference type="EMBL" id="AF222894">
    <property type="protein sequence ID" value="AAF30413.1"/>
    <property type="molecule type" value="Genomic_DNA"/>
</dbReference>
<dbReference type="RefSeq" id="WP_006688510.1">
    <property type="nucleotide sequence ID" value="NC_002162.1"/>
</dbReference>
<dbReference type="SMR" id="Q9PRD7"/>
<dbReference type="STRING" id="273119.UU008"/>
<dbReference type="EnsemblBacteria" id="AAF30413">
    <property type="protein sequence ID" value="AAF30413"/>
    <property type="gene ID" value="UU008"/>
</dbReference>
<dbReference type="GeneID" id="29672239"/>
<dbReference type="KEGG" id="uur:UU008"/>
<dbReference type="HOGENOM" id="CLU_1668658_0_0_14"/>
<dbReference type="OrthoDB" id="404041at2"/>
<dbReference type="Proteomes" id="UP000000423">
    <property type="component" value="Chromosome"/>
</dbReference>
<dbReference type="GO" id="GO:0005886">
    <property type="term" value="C:plasma membrane"/>
    <property type="evidence" value="ECO:0007669"/>
    <property type="project" value="UniProtKB-SubCell"/>
</dbReference>
<dbReference type="Gene3D" id="1.20.1280.290">
    <property type="match status" value="1"/>
</dbReference>
<gene>
    <name type="ordered locus">UU008</name>
</gene>
<comment type="subcellular location">
    <subcellularLocation>
        <location evidence="2">Cell membrane</location>
        <topology evidence="2">Multi-pass membrane protein</topology>
    </subcellularLocation>
</comment>
<comment type="similarity">
    <text evidence="2">To U.parvum UU007, UU041 and UU042.</text>
</comment>
<protein>
    <recommendedName>
        <fullName>Uncharacterized protein UU008</fullName>
    </recommendedName>
</protein>
<feature type="chain" id="PRO_0000220781" description="Uncharacterized protein UU008">
    <location>
        <begin position="1"/>
        <end position="158"/>
    </location>
</feature>
<feature type="transmembrane region" description="Helical" evidence="1">
    <location>
        <begin position="45"/>
        <end position="65"/>
    </location>
</feature>
<feature type="transmembrane region" description="Helical" evidence="1">
    <location>
        <begin position="76"/>
        <end position="96"/>
    </location>
</feature>
<feature type="transmembrane region" description="Helical" evidence="1">
    <location>
        <begin position="106"/>
        <end position="126"/>
    </location>
</feature>
<sequence>MNFTSLLQDGIYEVGNGAIVTDQSPYLGITPDYQGAYGFPTHPWGIFFQVVGAILVFGAYLPAVIKVLISKRTENLAIGMWIISIAGLGLLAIFAWLGVSVNPGGFILVALSETLSCIASIIVFALKIANKAKAKAAGMTELEYCNLHYPIVKKLPKR</sequence>
<evidence type="ECO:0000255" key="1"/>
<evidence type="ECO:0000305" key="2"/>
<accession>Q9PRD7</accession>
<organism>
    <name type="scientific">Ureaplasma parvum serovar 3 (strain ATCC 700970)</name>
    <dbReference type="NCBI Taxonomy" id="273119"/>
    <lineage>
        <taxon>Bacteria</taxon>
        <taxon>Bacillati</taxon>
        <taxon>Mycoplasmatota</taxon>
        <taxon>Mycoplasmoidales</taxon>
        <taxon>Mycoplasmoidaceae</taxon>
        <taxon>Ureaplasma</taxon>
    </lineage>
</organism>
<name>Y008_UREPA</name>
<reference key="1">
    <citation type="journal article" date="2000" name="Nature">
        <title>The complete sequence of the mucosal pathogen Ureaplasma urealyticum.</title>
        <authorList>
            <person name="Glass J.I."/>
            <person name="Lefkowitz E.J."/>
            <person name="Glass J.S."/>
            <person name="Heiner C.R."/>
            <person name="Chen E.Y."/>
            <person name="Cassell G.H."/>
        </authorList>
    </citation>
    <scope>NUCLEOTIDE SEQUENCE [LARGE SCALE GENOMIC DNA]</scope>
    <source>
        <strain>ATCC 700970</strain>
    </source>
</reference>
<keyword id="KW-1003">Cell membrane</keyword>
<keyword id="KW-0472">Membrane</keyword>
<keyword id="KW-1185">Reference proteome</keyword>
<keyword id="KW-0812">Transmembrane</keyword>
<keyword id="KW-1133">Transmembrane helix</keyword>